<name>TAL_ACIET</name>
<feature type="chain" id="PRO_1000198453" description="Transaldolase">
    <location>
        <begin position="1"/>
        <end position="316"/>
    </location>
</feature>
<feature type="active site" description="Schiff-base intermediate with substrate" evidence="2">
    <location>
        <position position="125"/>
    </location>
</feature>
<sequence length="316" mass="34486">MNQLDALKQYTTVVADTGDFKQLAQFQPQDATTNPSLILKAVQKPEYAPLLKDCVTRWHGRAIDELMDRLIVRFGCEILSIIPGRVSTEVDARLSFDTAATVARAERIVELYQAEGLHIDRVLIKIAATWEGIQAARQLEQRGIHTNLTLLFSFAQAVACGQAKVQLISPFVGRIYDWYKKQAGANWDEAAMAGANDPGVQSVRAIYNHYKHFGIGTEVMGASFRNTGQIVALAGCDLLTIAPELLAQLAASDAPVARVLDPEAARRVALQPVQYDEAGFRYALNADAMATEKLAEGIRAFAADAAKLEQLMQAAA</sequence>
<accession>B9MDC2</accession>
<proteinExistence type="inferred from homology"/>
<organism>
    <name type="scientific">Acidovorax ebreus (strain TPSY)</name>
    <name type="common">Diaphorobacter sp. (strain TPSY)</name>
    <dbReference type="NCBI Taxonomy" id="535289"/>
    <lineage>
        <taxon>Bacteria</taxon>
        <taxon>Pseudomonadati</taxon>
        <taxon>Pseudomonadota</taxon>
        <taxon>Betaproteobacteria</taxon>
        <taxon>Burkholderiales</taxon>
        <taxon>Comamonadaceae</taxon>
        <taxon>Diaphorobacter</taxon>
    </lineage>
</organism>
<evidence type="ECO:0000250" key="1"/>
<evidence type="ECO:0000255" key="2">
    <source>
        <dbReference type="HAMAP-Rule" id="MF_00492"/>
    </source>
</evidence>
<dbReference type="EC" id="2.2.1.2" evidence="2"/>
<dbReference type="EMBL" id="CP001392">
    <property type="protein sequence ID" value="ACM32154.1"/>
    <property type="molecule type" value="Genomic_DNA"/>
</dbReference>
<dbReference type="RefSeq" id="WP_012655675.1">
    <property type="nucleotide sequence ID" value="NC_011992.1"/>
</dbReference>
<dbReference type="SMR" id="B9MDC2"/>
<dbReference type="KEGG" id="dia:Dtpsy_0674"/>
<dbReference type="eggNOG" id="COG0176">
    <property type="taxonomic scope" value="Bacteria"/>
</dbReference>
<dbReference type="HOGENOM" id="CLU_047470_0_1_4"/>
<dbReference type="UniPathway" id="UPA00115">
    <property type="reaction ID" value="UER00414"/>
</dbReference>
<dbReference type="Proteomes" id="UP000000450">
    <property type="component" value="Chromosome"/>
</dbReference>
<dbReference type="GO" id="GO:0005737">
    <property type="term" value="C:cytoplasm"/>
    <property type="evidence" value="ECO:0007669"/>
    <property type="project" value="UniProtKB-SubCell"/>
</dbReference>
<dbReference type="GO" id="GO:0004801">
    <property type="term" value="F:transaldolase activity"/>
    <property type="evidence" value="ECO:0000250"/>
    <property type="project" value="UniProtKB"/>
</dbReference>
<dbReference type="GO" id="GO:0005975">
    <property type="term" value="P:carbohydrate metabolic process"/>
    <property type="evidence" value="ECO:0007669"/>
    <property type="project" value="InterPro"/>
</dbReference>
<dbReference type="GO" id="GO:0006098">
    <property type="term" value="P:pentose-phosphate shunt"/>
    <property type="evidence" value="ECO:0007669"/>
    <property type="project" value="UniProtKB-UniRule"/>
</dbReference>
<dbReference type="CDD" id="cd00957">
    <property type="entry name" value="Transaldolase_TalAB"/>
    <property type="match status" value="1"/>
</dbReference>
<dbReference type="FunFam" id="3.20.20.70:FF:000002">
    <property type="entry name" value="Transaldolase"/>
    <property type="match status" value="1"/>
</dbReference>
<dbReference type="Gene3D" id="3.20.20.70">
    <property type="entry name" value="Aldolase class I"/>
    <property type="match status" value="1"/>
</dbReference>
<dbReference type="HAMAP" id="MF_00492">
    <property type="entry name" value="Transaldolase_1"/>
    <property type="match status" value="1"/>
</dbReference>
<dbReference type="InterPro" id="IPR013785">
    <property type="entry name" value="Aldolase_TIM"/>
</dbReference>
<dbReference type="InterPro" id="IPR001585">
    <property type="entry name" value="TAL/FSA"/>
</dbReference>
<dbReference type="InterPro" id="IPR004730">
    <property type="entry name" value="Transaldolase_1"/>
</dbReference>
<dbReference type="InterPro" id="IPR018225">
    <property type="entry name" value="Transaldolase_AS"/>
</dbReference>
<dbReference type="NCBIfam" id="TIGR00874">
    <property type="entry name" value="talAB"/>
    <property type="match status" value="1"/>
</dbReference>
<dbReference type="PANTHER" id="PTHR10683">
    <property type="entry name" value="TRANSALDOLASE"/>
    <property type="match status" value="1"/>
</dbReference>
<dbReference type="PANTHER" id="PTHR10683:SF18">
    <property type="entry name" value="TRANSALDOLASE"/>
    <property type="match status" value="1"/>
</dbReference>
<dbReference type="Pfam" id="PF00923">
    <property type="entry name" value="TAL_FSA"/>
    <property type="match status" value="1"/>
</dbReference>
<dbReference type="SUPFAM" id="SSF51569">
    <property type="entry name" value="Aldolase"/>
    <property type="match status" value="1"/>
</dbReference>
<dbReference type="PROSITE" id="PS01054">
    <property type="entry name" value="TRANSALDOLASE_1"/>
    <property type="match status" value="1"/>
</dbReference>
<dbReference type="PROSITE" id="PS00958">
    <property type="entry name" value="TRANSALDOLASE_2"/>
    <property type="match status" value="1"/>
</dbReference>
<gene>
    <name evidence="2" type="primary">tal</name>
    <name type="ordered locus">Dtpsy_0674</name>
</gene>
<protein>
    <recommendedName>
        <fullName evidence="2">Transaldolase</fullName>
        <ecNumber evidence="2">2.2.1.2</ecNumber>
    </recommendedName>
</protein>
<comment type="function">
    <text evidence="2">Transaldolase is important for the balance of metabolites in the pentose-phosphate pathway.</text>
</comment>
<comment type="catalytic activity">
    <reaction evidence="2">
        <text>D-sedoheptulose 7-phosphate + D-glyceraldehyde 3-phosphate = D-erythrose 4-phosphate + beta-D-fructose 6-phosphate</text>
        <dbReference type="Rhea" id="RHEA:17053"/>
        <dbReference type="ChEBI" id="CHEBI:16897"/>
        <dbReference type="ChEBI" id="CHEBI:57483"/>
        <dbReference type="ChEBI" id="CHEBI:57634"/>
        <dbReference type="ChEBI" id="CHEBI:59776"/>
        <dbReference type="EC" id="2.2.1.2"/>
    </reaction>
</comment>
<comment type="pathway">
    <text evidence="2">Carbohydrate degradation; pentose phosphate pathway; D-glyceraldehyde 3-phosphate and beta-D-fructose 6-phosphate from D-ribose 5-phosphate and D-xylulose 5-phosphate (non-oxidative stage): step 2/3.</text>
</comment>
<comment type="subunit">
    <text evidence="1">Homodimer.</text>
</comment>
<comment type="subcellular location">
    <subcellularLocation>
        <location evidence="2">Cytoplasm</location>
    </subcellularLocation>
</comment>
<comment type="similarity">
    <text evidence="2">Belongs to the transaldolase family. Type 1 subfamily.</text>
</comment>
<keyword id="KW-0963">Cytoplasm</keyword>
<keyword id="KW-0570">Pentose shunt</keyword>
<keyword id="KW-1185">Reference proteome</keyword>
<keyword id="KW-0704">Schiff base</keyword>
<keyword id="KW-0808">Transferase</keyword>
<reference key="1">
    <citation type="submission" date="2009-01" db="EMBL/GenBank/DDBJ databases">
        <title>Complete sequence of Diaphorobacter sp. TPSY.</title>
        <authorList>
            <consortium name="US DOE Joint Genome Institute"/>
            <person name="Lucas S."/>
            <person name="Copeland A."/>
            <person name="Lapidus A."/>
            <person name="Glavina del Rio T."/>
            <person name="Tice H."/>
            <person name="Bruce D."/>
            <person name="Goodwin L."/>
            <person name="Pitluck S."/>
            <person name="Chertkov O."/>
            <person name="Brettin T."/>
            <person name="Detter J.C."/>
            <person name="Han C."/>
            <person name="Larimer F."/>
            <person name="Land M."/>
            <person name="Hauser L."/>
            <person name="Kyrpides N."/>
            <person name="Mikhailova N."/>
            <person name="Coates J.D."/>
        </authorList>
    </citation>
    <scope>NUCLEOTIDE SEQUENCE [LARGE SCALE GENOMIC DNA]</scope>
    <source>
        <strain>TPSY</strain>
    </source>
</reference>